<gene>
    <name type="ordered locus">MJ0835.1</name>
</gene>
<name>Y83B_METJA</name>
<accession>P81323</accession>
<feature type="propeptide" id="PRO_0000462039" evidence="3">
    <location>
        <begin position="1"/>
        <end position="14"/>
    </location>
</feature>
<feature type="chain" id="PRO_0000218267" description="Probable pilin MJ0835.1">
    <location>
        <begin position="15"/>
        <end position="130"/>
    </location>
</feature>
<feature type="short sequence motif" description="QXSXEXXXL" evidence="3">
    <location>
        <begin position="15"/>
        <end position="23"/>
    </location>
</feature>
<organism>
    <name type="scientific">Methanocaldococcus jannaschii (strain ATCC 43067 / DSM 2661 / JAL-1 / JCM 10045 / NBRC 100440)</name>
    <name type="common">Methanococcus jannaschii</name>
    <dbReference type="NCBI Taxonomy" id="243232"/>
    <lineage>
        <taxon>Archaea</taxon>
        <taxon>Methanobacteriati</taxon>
        <taxon>Methanobacteriota</taxon>
        <taxon>Methanomada group</taxon>
        <taxon>Methanococci</taxon>
        <taxon>Methanococcales</taxon>
        <taxon>Methanocaldococcaceae</taxon>
        <taxon>Methanocaldococcus</taxon>
    </lineage>
</organism>
<evidence type="ECO:0000250" key="1">
    <source>
        <dbReference type="UniProtKB" id="Q6LWM4"/>
    </source>
</evidence>
<evidence type="ECO:0000250" key="2">
    <source>
        <dbReference type="UniProtKB" id="Q6M0N7"/>
    </source>
</evidence>
<evidence type="ECO:0000305" key="3"/>
<sequence>MNTMENKIIKSKKAQVSLEFSFLFLAILLASIITISHFLSQNFTKDDKVISDVENAAKTAVILANSGYNGINPNVTLIYGGISWSGNKKNIYIYISPKSYITPEIKNFIVSYIYNVTKINQSEYNITVNP</sequence>
<reference key="1">
    <citation type="journal article" date="1996" name="Science">
        <title>Complete genome sequence of the methanogenic archaeon, Methanococcus jannaschii.</title>
        <authorList>
            <person name="Bult C.J."/>
            <person name="White O."/>
            <person name="Olsen G.J."/>
            <person name="Zhou L."/>
            <person name="Fleischmann R.D."/>
            <person name="Sutton G.G."/>
            <person name="Blake J.A."/>
            <person name="FitzGerald L.M."/>
            <person name="Clayton R.A."/>
            <person name="Gocayne J.D."/>
            <person name="Kerlavage A.R."/>
            <person name="Dougherty B.A."/>
            <person name="Tomb J.-F."/>
            <person name="Adams M.D."/>
            <person name="Reich C.I."/>
            <person name="Overbeek R."/>
            <person name="Kirkness E.F."/>
            <person name="Weinstock K.G."/>
            <person name="Merrick J.M."/>
            <person name="Glodek A."/>
            <person name="Scott J.L."/>
            <person name="Geoghagen N.S.M."/>
            <person name="Weidman J.F."/>
            <person name="Fuhrmann J.L."/>
            <person name="Nguyen D."/>
            <person name="Utterback T.R."/>
            <person name="Kelley J.M."/>
            <person name="Peterson J.D."/>
            <person name="Sadow P.W."/>
            <person name="Hanna M.C."/>
            <person name="Cotton M.D."/>
            <person name="Roberts K.M."/>
            <person name="Hurst M.A."/>
            <person name="Kaine B.P."/>
            <person name="Borodovsky M."/>
            <person name="Klenk H.-P."/>
            <person name="Fraser C.M."/>
            <person name="Smith H.O."/>
            <person name="Woese C.R."/>
            <person name="Venter J.C."/>
        </authorList>
    </citation>
    <scope>NUCLEOTIDE SEQUENCE [LARGE SCALE GENOMIC DNA]</scope>
    <source>
        <strain>ATCC 43067 / DSM 2661 / JAL-1 / JCM 10045 / NBRC 100440</strain>
    </source>
</reference>
<comment type="subcellular location">
    <subcellularLocation>
        <location evidence="1">Secreted</location>
    </subcellularLocation>
    <subcellularLocation>
        <location evidence="1">Cell surface</location>
    </subcellularLocation>
    <subcellularLocation>
        <location evidence="1">Fimbrium</location>
    </subcellularLocation>
</comment>
<comment type="domain">
    <text evidence="2">Contains an amino terminal motif QXSXEXXXL, which is part of a class III signal sequence.</text>
</comment>
<comment type="PTM">
    <text evidence="1">The N-terminus is cleaved by the prepilin peptidase EppA, which recognizes the class III signal sequence.</text>
</comment>
<proteinExistence type="inferred from homology"/>
<protein>
    <recommendedName>
        <fullName evidence="3">Probable pilin MJ0835.1</fullName>
    </recommendedName>
</protein>
<dbReference type="EMBL" id="L77117">
    <property type="protein sequence ID" value="AAB98841.1"/>
    <property type="molecule type" value="Genomic_DNA"/>
</dbReference>
<dbReference type="SMR" id="P81323"/>
<dbReference type="STRING" id="243232.MJ_0835.1"/>
<dbReference type="PaxDb" id="243232-MJ_0835.1"/>
<dbReference type="EnsemblBacteria" id="AAB98841">
    <property type="protein sequence ID" value="AAB98841"/>
    <property type="gene ID" value="MJ_0835.1"/>
</dbReference>
<dbReference type="KEGG" id="mja:MJ_0835.1"/>
<dbReference type="eggNOG" id="arCOG05055">
    <property type="taxonomic scope" value="Archaea"/>
</dbReference>
<dbReference type="HOGENOM" id="CLU_143949_0_0_2"/>
<dbReference type="InParanoid" id="P81323"/>
<dbReference type="Proteomes" id="UP000000805">
    <property type="component" value="Chromosome"/>
</dbReference>
<dbReference type="GO" id="GO:0009986">
    <property type="term" value="C:cell surface"/>
    <property type="evidence" value="ECO:0007669"/>
    <property type="project" value="UniProtKB-SubCell"/>
</dbReference>
<dbReference type="GO" id="GO:0005576">
    <property type="term" value="C:extracellular region"/>
    <property type="evidence" value="ECO:0007669"/>
    <property type="project" value="UniProtKB-SubCell"/>
</dbReference>
<dbReference type="GO" id="GO:0016020">
    <property type="term" value="C:membrane"/>
    <property type="evidence" value="ECO:0007669"/>
    <property type="project" value="UniProtKB-KW"/>
</dbReference>
<dbReference type="InterPro" id="IPR007166">
    <property type="entry name" value="Class3_signal_pept_motif"/>
</dbReference>
<dbReference type="Pfam" id="PF04021">
    <property type="entry name" value="Class_IIIsignal"/>
    <property type="match status" value="1"/>
</dbReference>
<keyword id="KW-0281">Fimbrium</keyword>
<keyword id="KW-1185">Reference proteome</keyword>
<keyword id="KW-0964">Secreted</keyword>